<sequence length="291" mass="33832">MQSQTNPNPSLPDDLILSCVARVSRLYYPALSLVSKSFRSLIASPELYKTRSLLDRTESCLYILYCTSNTWHEGPRLRVKLMSCTACVLDEKIYVSGRCKDGDSMTFQVFDTNTQTWDPLSVPCSETKHDFHYKIVRFDGKLHLVSYKGVDAYNSKEGRWDLVTPSIEHNKYLYDCYRNIGNVWYTIVKGDISTSVWWYHSEEREWRDLKGMVGLPKFPIDACLRMVDYGGKMAVLWDDYLPGRRKKMIWCAEIALERRGSLEIWGKVEWFAHVLTVPRQYEFVKVLAATL</sequence>
<proteinExistence type="evidence at transcript level"/>
<evidence type="ECO:0000303" key="1">
    <source>
    </source>
</evidence>
<gene>
    <name type="ordered locus">At5g38670</name>
    <name type="ORF">MBB18.22</name>
</gene>
<reference key="1">
    <citation type="journal article" date="1997" name="DNA Res.">
        <title>Structural analysis of Arabidopsis thaliana chromosome 5. I. Sequence features of the 1.6 Mb regions covered by twenty physically assigned P1 clones.</title>
        <authorList>
            <person name="Sato S."/>
            <person name="Kotani H."/>
            <person name="Nakamura Y."/>
            <person name="Kaneko T."/>
            <person name="Asamizu E."/>
            <person name="Fukami M."/>
            <person name="Miyajima N."/>
            <person name="Tabata S."/>
        </authorList>
    </citation>
    <scope>NUCLEOTIDE SEQUENCE [LARGE SCALE GENOMIC DNA]</scope>
    <source>
        <strain>cv. Columbia</strain>
    </source>
</reference>
<reference key="2">
    <citation type="journal article" date="2017" name="Plant J.">
        <title>Araport11: a complete reannotation of the Arabidopsis thaliana reference genome.</title>
        <authorList>
            <person name="Cheng C.Y."/>
            <person name="Krishnakumar V."/>
            <person name="Chan A.P."/>
            <person name="Thibaud-Nissen F."/>
            <person name="Schobel S."/>
            <person name="Town C.D."/>
        </authorList>
    </citation>
    <scope>GENOME REANNOTATION</scope>
    <source>
        <strain>cv. Columbia</strain>
    </source>
</reference>
<reference key="3">
    <citation type="journal article" date="2006" name="Plant Biotechnol. J.">
        <title>Simultaneous high-throughput recombinational cloning of open reading frames in closed and open configurations.</title>
        <authorList>
            <person name="Underwood B.A."/>
            <person name="Vanderhaeghen R."/>
            <person name="Whitford R."/>
            <person name="Town C.D."/>
            <person name="Hilson P."/>
        </authorList>
    </citation>
    <scope>NUCLEOTIDE SEQUENCE [LARGE SCALE MRNA] (ISOFORM 2)</scope>
    <source>
        <strain>cv. Columbia</strain>
    </source>
</reference>
<accession>Q9FFV5</accession>
<accession>Q1PDQ6</accession>
<feature type="chain" id="PRO_0000396072" description="F-box/kelch-repeat protein At5g38670">
    <location>
        <begin position="1"/>
        <end position="291"/>
    </location>
</feature>
<feature type="domain" description="F-box">
    <location>
        <begin position="5"/>
        <end position="51"/>
    </location>
</feature>
<feature type="repeat" description="Kelch 1">
    <location>
        <begin position="46"/>
        <end position="91"/>
    </location>
</feature>
<feature type="repeat" description="Kelch 2">
    <location>
        <begin position="92"/>
        <end position="140"/>
    </location>
</feature>
<feature type="repeat" description="Kelch 3">
    <location>
        <begin position="142"/>
        <end position="187"/>
    </location>
</feature>
<feature type="repeat" description="Kelch 4">
    <location>
        <begin position="189"/>
        <end position="232"/>
    </location>
</feature>
<feature type="splice variant" id="VSP_039577" description="In isoform 2." evidence="1">
    <location>
        <begin position="1"/>
        <end position="81"/>
    </location>
</feature>
<feature type="splice variant" id="VSP_039578" description="In isoform 2." evidence="1">
    <location>
        <begin position="149"/>
        <end position="180"/>
    </location>
</feature>
<organism>
    <name type="scientific">Arabidopsis thaliana</name>
    <name type="common">Mouse-ear cress</name>
    <dbReference type="NCBI Taxonomy" id="3702"/>
    <lineage>
        <taxon>Eukaryota</taxon>
        <taxon>Viridiplantae</taxon>
        <taxon>Streptophyta</taxon>
        <taxon>Embryophyta</taxon>
        <taxon>Tracheophyta</taxon>
        <taxon>Spermatophyta</taxon>
        <taxon>Magnoliopsida</taxon>
        <taxon>eudicotyledons</taxon>
        <taxon>Gunneridae</taxon>
        <taxon>Pentapetalae</taxon>
        <taxon>rosids</taxon>
        <taxon>malvids</taxon>
        <taxon>Brassicales</taxon>
        <taxon>Brassicaceae</taxon>
        <taxon>Camelineae</taxon>
        <taxon>Arabidopsis</taxon>
    </lineage>
</organism>
<comment type="alternative products">
    <event type="alternative splicing"/>
    <isoform>
        <id>Q9FFV5-1</id>
        <name>1</name>
        <sequence type="displayed"/>
    </isoform>
    <isoform>
        <id>Q9FFV5-2</id>
        <name>2</name>
        <sequence type="described" ref="VSP_039577 VSP_039578"/>
    </isoform>
</comment>
<protein>
    <recommendedName>
        <fullName>F-box/kelch-repeat protein At5g38670</fullName>
    </recommendedName>
</protein>
<dbReference type="EMBL" id="AB005231">
    <property type="protein sequence ID" value="BAB10157.1"/>
    <property type="molecule type" value="Genomic_DNA"/>
</dbReference>
<dbReference type="EMBL" id="CP002688">
    <property type="protein sequence ID" value="AED94348.1"/>
    <property type="molecule type" value="Genomic_DNA"/>
</dbReference>
<dbReference type="EMBL" id="DQ447012">
    <property type="protein sequence ID" value="ABE66200.1"/>
    <property type="molecule type" value="mRNA"/>
</dbReference>
<dbReference type="RefSeq" id="NP_198683.1">
    <molecule id="Q9FFV5-1"/>
    <property type="nucleotide sequence ID" value="NM_123228.1"/>
</dbReference>
<dbReference type="SMR" id="Q9FFV5"/>
<dbReference type="iPTMnet" id="Q9FFV5"/>
<dbReference type="PaxDb" id="3702-AT5G38670.1"/>
<dbReference type="EnsemblPlants" id="AT5G38670.1">
    <molecule id="Q9FFV5-1"/>
    <property type="protein sequence ID" value="AT5G38670.1"/>
    <property type="gene ID" value="AT5G38670"/>
</dbReference>
<dbReference type="GeneID" id="833857"/>
<dbReference type="Gramene" id="AT5G38670.1">
    <molecule id="Q9FFV5-1"/>
    <property type="protein sequence ID" value="AT5G38670.1"/>
    <property type="gene ID" value="AT5G38670"/>
</dbReference>
<dbReference type="KEGG" id="ath:AT5G38670"/>
<dbReference type="Araport" id="AT5G38670"/>
<dbReference type="TAIR" id="AT5G38670"/>
<dbReference type="eggNOG" id="KOG1072">
    <property type="taxonomic scope" value="Eukaryota"/>
</dbReference>
<dbReference type="HOGENOM" id="CLU_032521_1_2_1"/>
<dbReference type="InParanoid" id="Q9FFV5"/>
<dbReference type="OMA" id="RYHQYAS"/>
<dbReference type="PhylomeDB" id="Q9FFV5"/>
<dbReference type="PRO" id="PR:Q9FFV5"/>
<dbReference type="Proteomes" id="UP000006548">
    <property type="component" value="Chromosome 5"/>
</dbReference>
<dbReference type="ExpressionAtlas" id="Q9FFV5">
    <property type="expression patterns" value="differential"/>
</dbReference>
<dbReference type="CDD" id="cd22152">
    <property type="entry name" value="F-box_AtAFR-like"/>
    <property type="match status" value="1"/>
</dbReference>
<dbReference type="Gene3D" id="2.120.10.80">
    <property type="entry name" value="Kelch-type beta propeller"/>
    <property type="match status" value="1"/>
</dbReference>
<dbReference type="InterPro" id="IPR036047">
    <property type="entry name" value="F-box-like_dom_sf"/>
</dbReference>
<dbReference type="InterPro" id="IPR050354">
    <property type="entry name" value="F-box/kelch-repeat_ARATH"/>
</dbReference>
<dbReference type="InterPro" id="IPR001810">
    <property type="entry name" value="F-box_dom"/>
</dbReference>
<dbReference type="InterPro" id="IPR015915">
    <property type="entry name" value="Kelch-typ_b-propeller"/>
</dbReference>
<dbReference type="PANTHER" id="PTHR24414">
    <property type="entry name" value="F-BOX/KELCH-REPEAT PROTEIN SKIP4"/>
    <property type="match status" value="1"/>
</dbReference>
<dbReference type="PANTHER" id="PTHR24414:SF184">
    <property type="entry name" value="GALACTOSE OXIDASE_KELCH REPEAT SUPERFAMILY PROTEIN"/>
    <property type="match status" value="1"/>
</dbReference>
<dbReference type="Pfam" id="PF00646">
    <property type="entry name" value="F-box"/>
    <property type="match status" value="1"/>
</dbReference>
<dbReference type="Pfam" id="PF25210">
    <property type="entry name" value="Kelch_FKB95"/>
    <property type="match status" value="1"/>
</dbReference>
<dbReference type="SMART" id="SM00256">
    <property type="entry name" value="FBOX"/>
    <property type="match status" value="1"/>
</dbReference>
<dbReference type="SUPFAM" id="SSF81383">
    <property type="entry name" value="F-box domain"/>
    <property type="match status" value="1"/>
</dbReference>
<dbReference type="SUPFAM" id="SSF117281">
    <property type="entry name" value="Kelch motif"/>
    <property type="match status" value="1"/>
</dbReference>
<name>FK130_ARATH</name>
<keyword id="KW-0025">Alternative splicing</keyword>
<keyword id="KW-0880">Kelch repeat</keyword>
<keyword id="KW-1185">Reference proteome</keyword>
<keyword id="KW-0677">Repeat</keyword>